<feature type="chain" id="PRO_0000048659" description="Sex-determining region Y protein">
    <location>
        <begin position="1"/>
        <end position="201"/>
    </location>
</feature>
<feature type="DNA-binding region" description="HMG box" evidence="3">
    <location>
        <begin position="54"/>
        <end position="122"/>
    </location>
</feature>
<feature type="region of interest" description="Disordered" evidence="4">
    <location>
        <begin position="166"/>
        <end position="201"/>
    </location>
</feature>
<feature type="compositionally biased region" description="Polar residues" evidence="4">
    <location>
        <begin position="186"/>
        <end position="195"/>
    </location>
</feature>
<proteinExistence type="inferred from homology"/>
<reference key="1">
    <citation type="journal article" date="2003" name="Mammal Study">
        <title>SRY gene structure and phylogeny in the cetacean species.</title>
        <authorList>
            <person name="Nishida S."/>
            <person name="Pastene L.A."/>
            <person name="Goto M."/>
            <person name="Koike H."/>
        </authorList>
    </citation>
    <scope>NUCLEOTIDE SEQUENCE [GENOMIC DNA]</scope>
</reference>
<evidence type="ECO:0000250" key="1">
    <source>
        <dbReference type="UniProtKB" id="P36394"/>
    </source>
</evidence>
<evidence type="ECO:0000250" key="2">
    <source>
        <dbReference type="UniProtKB" id="Q05066"/>
    </source>
</evidence>
<evidence type="ECO:0000255" key="3">
    <source>
        <dbReference type="PROSITE-ProRule" id="PRU00267"/>
    </source>
</evidence>
<evidence type="ECO:0000256" key="4">
    <source>
        <dbReference type="SAM" id="MobiDB-lite"/>
    </source>
</evidence>
<evidence type="ECO:0000305" key="5"/>
<gene>
    <name type="primary">SRY</name>
    <name type="synonym">TDF</name>
</gene>
<sequence>MFRIVNGEDYSPAVQQRNILDFGKAPSLLWTDNGSSNDRCETGGNCRESGQDRVKRPMNAFIVWSRDQRRKVALENPQMQNSEISKRLGYDWKMLTEAEKQPFFEEAQRLRAMHRDKYPGYKYRPRRKAKEATEIASRRLFSTVQPNAHRGDLVPLHIQGRLRQGHTFTNGKPVKPLAAHEHKQLTPATGASQQLDKPAPQ</sequence>
<organism>
    <name type="scientific">Delphinapterus leucas</name>
    <name type="common">Beluga whale</name>
    <dbReference type="NCBI Taxonomy" id="9749"/>
    <lineage>
        <taxon>Eukaryota</taxon>
        <taxon>Metazoa</taxon>
        <taxon>Chordata</taxon>
        <taxon>Craniata</taxon>
        <taxon>Vertebrata</taxon>
        <taxon>Euteleostomi</taxon>
        <taxon>Mammalia</taxon>
        <taxon>Eutheria</taxon>
        <taxon>Laurasiatheria</taxon>
        <taxon>Artiodactyla</taxon>
        <taxon>Whippomorpha</taxon>
        <taxon>Cetacea</taxon>
        <taxon>Odontoceti</taxon>
        <taxon>Monodontidae</taxon>
        <taxon>Delphinapterus</taxon>
    </lineage>
</organism>
<comment type="function">
    <text evidence="1 2">Transcriptional regulator that controls a genetic switch in male development. It is necessary and sufficient for initiating male sex determination by directing the development of supporting cell precursors (pre-Sertoli cells) as Sertoli rather than granulosa cells. Involved in different aspects of gene regulation including promoter activation or repression. Binds to the DNA consensus sequence 5'-[AT]AACAA[AT]-3'. SRY HMG box recognizes DNA by partial intercalation in the minor groove and promotes DNA bending. Also involved in pre-mRNA splicing (By similarity). In male adult brain involved in the maintenance of motor functions of dopaminergic neurons (By similarity).</text>
</comment>
<comment type="subunit">
    <text evidence="2">Interacts with CALM, EP300, HDAC3, KPNB1, ZNF208 isoform KRAB-O, PARP1, SLC9A3R2 and WT1. The interaction with EP300 modulates its DNA-binding activity. The interaction with KPNB1 is sensitive to dissociation by Ran in the GTP-bound form. Interaction with PARP1 impaired its DNA-binding activity.</text>
</comment>
<comment type="subcellular location">
    <subcellularLocation>
        <location evidence="2">Nucleus speckle</location>
    </subcellularLocation>
    <subcellularLocation>
        <location evidence="2">Cytoplasm</location>
    </subcellularLocation>
    <subcellularLocation>
        <location evidence="2">Nucleus</location>
    </subcellularLocation>
</comment>
<comment type="PTM">
    <text evidence="2">Acetylation of Lys-130 contributes to its nuclear localization and enhances its interaction with KPNB1. Deacetylated by HDAC3.</text>
</comment>
<comment type="similarity">
    <text evidence="5">Belongs to the SRY family.</text>
</comment>
<comment type="online information" name="Protein Spotlight">
    <link uri="https://www.proteinspotlight.org/back_issues/080"/>
    <text>The tenuous nature of sex - Issue 80 of March 2007</text>
</comment>
<dbReference type="EMBL" id="AB108518">
    <property type="protein sequence ID" value="BAC75650.1"/>
    <property type="molecule type" value="Genomic_DNA"/>
</dbReference>
<dbReference type="SMR" id="Q864Q3"/>
<dbReference type="FunCoup" id="Q864Q3">
    <property type="interactions" value="12"/>
</dbReference>
<dbReference type="STRING" id="9749.Q864Q3"/>
<dbReference type="InParanoid" id="Q864Q3"/>
<dbReference type="Proteomes" id="UP000248483">
    <property type="component" value="Unplaced"/>
</dbReference>
<dbReference type="GO" id="GO:0005737">
    <property type="term" value="C:cytoplasm"/>
    <property type="evidence" value="ECO:0007669"/>
    <property type="project" value="UniProtKB-SubCell"/>
</dbReference>
<dbReference type="GO" id="GO:0016607">
    <property type="term" value="C:nuclear speck"/>
    <property type="evidence" value="ECO:0007669"/>
    <property type="project" value="UniProtKB-SubCell"/>
</dbReference>
<dbReference type="GO" id="GO:0005634">
    <property type="term" value="C:nucleus"/>
    <property type="evidence" value="ECO:0000250"/>
    <property type="project" value="UniProtKB"/>
</dbReference>
<dbReference type="GO" id="GO:0005516">
    <property type="term" value="F:calmodulin binding"/>
    <property type="evidence" value="ECO:0007669"/>
    <property type="project" value="UniProtKB-KW"/>
</dbReference>
<dbReference type="GO" id="GO:0001228">
    <property type="term" value="F:DNA-binding transcription activator activity, RNA polymerase II-specific"/>
    <property type="evidence" value="ECO:0007669"/>
    <property type="project" value="TreeGrafter"/>
</dbReference>
<dbReference type="GO" id="GO:0000978">
    <property type="term" value="F:RNA polymerase II cis-regulatory region sequence-specific DNA binding"/>
    <property type="evidence" value="ECO:0007669"/>
    <property type="project" value="TreeGrafter"/>
</dbReference>
<dbReference type="GO" id="GO:0030154">
    <property type="term" value="P:cell differentiation"/>
    <property type="evidence" value="ECO:0007669"/>
    <property type="project" value="UniProtKB-KW"/>
</dbReference>
<dbReference type="GO" id="GO:0030238">
    <property type="term" value="P:male sex determination"/>
    <property type="evidence" value="ECO:0007669"/>
    <property type="project" value="InterPro"/>
</dbReference>
<dbReference type="GO" id="GO:0007548">
    <property type="term" value="P:sex differentiation"/>
    <property type="evidence" value="ECO:0007669"/>
    <property type="project" value="UniProtKB-KW"/>
</dbReference>
<dbReference type="CDD" id="cd22034">
    <property type="entry name" value="HMG-box_SoxA_SRY"/>
    <property type="match status" value="1"/>
</dbReference>
<dbReference type="FunFam" id="1.10.30.10:FF:000002">
    <property type="entry name" value="transcription factor Sox-2"/>
    <property type="match status" value="1"/>
</dbReference>
<dbReference type="Gene3D" id="1.10.30.10">
    <property type="entry name" value="High mobility group box domain"/>
    <property type="match status" value="1"/>
</dbReference>
<dbReference type="InterPro" id="IPR009071">
    <property type="entry name" value="HMG_box_dom"/>
</dbReference>
<dbReference type="InterPro" id="IPR036910">
    <property type="entry name" value="HMG_box_dom_sf"/>
</dbReference>
<dbReference type="InterPro" id="IPR017253">
    <property type="entry name" value="SRY"/>
</dbReference>
<dbReference type="InterPro" id="IPR050140">
    <property type="entry name" value="SRY-related_HMG-box_TF-like"/>
</dbReference>
<dbReference type="PANTHER" id="PTHR10270:SF161">
    <property type="entry name" value="SEX-DETERMINING REGION Y PROTEIN"/>
    <property type="match status" value="1"/>
</dbReference>
<dbReference type="PANTHER" id="PTHR10270">
    <property type="entry name" value="SOX TRANSCRIPTION FACTOR"/>
    <property type="match status" value="1"/>
</dbReference>
<dbReference type="Pfam" id="PF00505">
    <property type="entry name" value="HMG_box"/>
    <property type="match status" value="1"/>
</dbReference>
<dbReference type="PIRSF" id="PIRSF037653">
    <property type="entry name" value="SRY"/>
    <property type="match status" value="1"/>
</dbReference>
<dbReference type="SMART" id="SM00398">
    <property type="entry name" value="HMG"/>
    <property type="match status" value="1"/>
</dbReference>
<dbReference type="SUPFAM" id="SSF47095">
    <property type="entry name" value="HMG-box"/>
    <property type="match status" value="1"/>
</dbReference>
<dbReference type="PROSITE" id="PS50118">
    <property type="entry name" value="HMG_BOX_2"/>
    <property type="match status" value="1"/>
</dbReference>
<protein>
    <recommendedName>
        <fullName>Sex-determining region Y protein</fullName>
    </recommendedName>
    <alternativeName>
        <fullName>Testis-determining factor</fullName>
    </alternativeName>
</protein>
<name>SRY_DELLE</name>
<keyword id="KW-0007">Acetylation</keyword>
<keyword id="KW-0010">Activator</keyword>
<keyword id="KW-0112">Calmodulin-binding</keyword>
<keyword id="KW-0963">Cytoplasm</keyword>
<keyword id="KW-0221">Differentiation</keyword>
<keyword id="KW-0238">DNA-binding</keyword>
<keyword id="KW-0539">Nucleus</keyword>
<keyword id="KW-1185">Reference proteome</keyword>
<keyword id="KW-0678">Repressor</keyword>
<keyword id="KW-0726">Sexual differentiation</keyword>
<keyword id="KW-0804">Transcription</keyword>
<keyword id="KW-0805">Transcription regulation</keyword>
<accession>Q864Q3</accession>